<name>Y3478_NOCFA</name>
<gene>
    <name type="ordered locus">NFA_34780</name>
</gene>
<sequence>MSISHFTALIWLGFLAVVALIALGYVLVQRSRHRQMLRFSNMEVLEKVAPSRPSPLRHAPIALMLVGLVFLTIAAAGPTSVQKVPRNRATVVLVMDVSLSMEATDVPPSRLEVAQQAGKEFVDGLTQGINLGFVTFAGTASVMQSPTTNREAVKAAIDNIKLAERTATGEGILTALQSIETLATVLGGAETPPPARIVLMSDGKQTVPDDKDVDNPRHAFTAARLAKSKGIPVSTISFGTEWGSVEIPDQDGQGGSQRVKVPVDNESLREIAKLSGGEFYTASSLEELTAVYDTLEEQIGYETTRGDASRPWLLLGMLVVAAGIVTGLLYRQRLP</sequence>
<protein>
    <recommendedName>
        <fullName evidence="1">UPF0353 protein NFA_34780</fullName>
    </recommendedName>
</protein>
<keyword id="KW-1003">Cell membrane</keyword>
<keyword id="KW-0472">Membrane</keyword>
<keyword id="KW-1185">Reference proteome</keyword>
<keyword id="KW-0812">Transmembrane</keyword>
<keyword id="KW-1133">Transmembrane helix</keyword>
<reference key="1">
    <citation type="journal article" date="2004" name="Proc. Natl. Acad. Sci. U.S.A.">
        <title>The complete genomic sequence of Nocardia farcinica IFM 10152.</title>
        <authorList>
            <person name="Ishikawa J."/>
            <person name="Yamashita A."/>
            <person name="Mikami Y."/>
            <person name="Hoshino Y."/>
            <person name="Kurita H."/>
            <person name="Hotta K."/>
            <person name="Shiba T."/>
            <person name="Hattori M."/>
        </authorList>
    </citation>
    <scope>NUCLEOTIDE SEQUENCE [LARGE SCALE GENOMIC DNA]</scope>
    <source>
        <strain>IFM 10152</strain>
    </source>
</reference>
<evidence type="ECO:0000255" key="1">
    <source>
        <dbReference type="HAMAP-Rule" id="MF_01340"/>
    </source>
</evidence>
<feature type="chain" id="PRO_0000057649" description="UPF0353 protein NFA_34780">
    <location>
        <begin position="1"/>
        <end position="335"/>
    </location>
</feature>
<feature type="transmembrane region" description="Helical" evidence="1">
    <location>
        <begin position="8"/>
        <end position="28"/>
    </location>
</feature>
<feature type="transmembrane region" description="Helical" evidence="1">
    <location>
        <begin position="61"/>
        <end position="81"/>
    </location>
</feature>
<feature type="transmembrane region" description="Helical" evidence="1">
    <location>
        <begin position="310"/>
        <end position="330"/>
    </location>
</feature>
<feature type="domain" description="VWFA" evidence="1">
    <location>
        <begin position="90"/>
        <end position="295"/>
    </location>
</feature>
<comment type="subcellular location">
    <subcellularLocation>
        <location evidence="1">Cell membrane</location>
        <topology evidence="1">Multi-pass membrane protein</topology>
    </subcellularLocation>
</comment>
<comment type="similarity">
    <text evidence="1">Belongs to the UPF0353 family.</text>
</comment>
<organism>
    <name type="scientific">Nocardia farcinica (strain IFM 10152)</name>
    <dbReference type="NCBI Taxonomy" id="247156"/>
    <lineage>
        <taxon>Bacteria</taxon>
        <taxon>Bacillati</taxon>
        <taxon>Actinomycetota</taxon>
        <taxon>Actinomycetes</taxon>
        <taxon>Mycobacteriales</taxon>
        <taxon>Nocardiaceae</taxon>
        <taxon>Nocardia</taxon>
    </lineage>
</organism>
<dbReference type="EMBL" id="AP006618">
    <property type="protein sequence ID" value="BAD58326.1"/>
    <property type="molecule type" value="Genomic_DNA"/>
</dbReference>
<dbReference type="RefSeq" id="WP_011210011.1">
    <property type="nucleotide sequence ID" value="NC_006361.1"/>
</dbReference>
<dbReference type="SMR" id="Q5YU15"/>
<dbReference type="STRING" id="247156.NFA_34780"/>
<dbReference type="GeneID" id="61134180"/>
<dbReference type="KEGG" id="nfa:NFA_34780"/>
<dbReference type="eggNOG" id="COG2304">
    <property type="taxonomic scope" value="Bacteria"/>
</dbReference>
<dbReference type="HOGENOM" id="CLU_024570_2_0_11"/>
<dbReference type="OrthoDB" id="8882959at2"/>
<dbReference type="Proteomes" id="UP000006820">
    <property type="component" value="Chromosome"/>
</dbReference>
<dbReference type="GO" id="GO:0005886">
    <property type="term" value="C:plasma membrane"/>
    <property type="evidence" value="ECO:0007669"/>
    <property type="project" value="UniProtKB-SubCell"/>
</dbReference>
<dbReference type="Gene3D" id="3.40.50.410">
    <property type="entry name" value="von Willebrand factor, type A domain"/>
    <property type="match status" value="1"/>
</dbReference>
<dbReference type="HAMAP" id="MF_01340">
    <property type="entry name" value="UPF0353"/>
    <property type="match status" value="1"/>
</dbReference>
<dbReference type="InterPro" id="IPR024163">
    <property type="entry name" value="Aerotolerance_reg_N"/>
</dbReference>
<dbReference type="InterPro" id="IPR022933">
    <property type="entry name" value="UPF0353"/>
</dbReference>
<dbReference type="InterPro" id="IPR050768">
    <property type="entry name" value="UPF0353/GerABKA_families"/>
</dbReference>
<dbReference type="InterPro" id="IPR002035">
    <property type="entry name" value="VWF_A"/>
</dbReference>
<dbReference type="InterPro" id="IPR036465">
    <property type="entry name" value="vWFA_dom_sf"/>
</dbReference>
<dbReference type="NCBIfam" id="NF010238">
    <property type="entry name" value="PRK13685.1"/>
    <property type="match status" value="1"/>
</dbReference>
<dbReference type="PANTHER" id="PTHR22550:SF5">
    <property type="entry name" value="LEUCINE ZIPPER PROTEIN 4"/>
    <property type="match status" value="1"/>
</dbReference>
<dbReference type="PANTHER" id="PTHR22550">
    <property type="entry name" value="SPORE GERMINATION PROTEIN"/>
    <property type="match status" value="1"/>
</dbReference>
<dbReference type="Pfam" id="PF07584">
    <property type="entry name" value="BatA"/>
    <property type="match status" value="1"/>
</dbReference>
<dbReference type="Pfam" id="PF13519">
    <property type="entry name" value="VWA_2"/>
    <property type="match status" value="1"/>
</dbReference>
<dbReference type="SMART" id="SM00327">
    <property type="entry name" value="VWA"/>
    <property type="match status" value="1"/>
</dbReference>
<dbReference type="SUPFAM" id="SSF53300">
    <property type="entry name" value="vWA-like"/>
    <property type="match status" value="1"/>
</dbReference>
<dbReference type="PROSITE" id="PS50234">
    <property type="entry name" value="VWFA"/>
    <property type="match status" value="1"/>
</dbReference>
<accession>Q5YU15</accession>
<proteinExistence type="inferred from homology"/>